<keyword id="KW-0106">Calcium</keyword>
<keyword id="KW-1003">Cell membrane</keyword>
<keyword id="KW-0868">Chloride</keyword>
<keyword id="KW-0869">Chloride channel</keyword>
<keyword id="KW-0325">Glycoprotein</keyword>
<keyword id="KW-0407">Ion channel</keyword>
<keyword id="KW-0406">Ion transport</keyword>
<keyword id="KW-0472">Membrane</keyword>
<keyword id="KW-1185">Reference proteome</keyword>
<keyword id="KW-0812">Transmembrane</keyword>
<keyword id="KW-1133">Transmembrane helix</keyword>
<keyword id="KW-0813">Transport</keyword>
<proteinExistence type="evidence at transcript level"/>
<name>TTY2L_DANRE</name>
<reference key="1">
    <citation type="submission" date="2004-04" db="EMBL/GenBank/DDBJ databases">
        <authorList>
            <consortium name="NIH - Zebrafish Gene Collection (ZGC) project"/>
        </authorList>
    </citation>
    <scope>NUCLEOTIDE SEQUENCE [LARGE SCALE MRNA]</scope>
    <source>
        <tissue>Embryo</tissue>
    </source>
</reference>
<feature type="chain" id="PRO_0000312248" description="Protein tweety homolog 2-like">
    <location>
        <begin position="1"/>
        <end position="531"/>
    </location>
</feature>
<feature type="topological domain" description="Extracellular" evidence="2">
    <location>
        <begin position="1"/>
        <end position="44"/>
    </location>
</feature>
<feature type="transmembrane region" description="Helical; Name=1" evidence="2">
    <location>
        <begin position="45"/>
        <end position="65"/>
    </location>
</feature>
<feature type="topological domain" description="Cytoplasmic" evidence="2">
    <location>
        <begin position="66"/>
        <end position="87"/>
    </location>
</feature>
<feature type="transmembrane region" description="Helical; Name=2" evidence="2">
    <location>
        <begin position="88"/>
        <end position="108"/>
    </location>
</feature>
<feature type="topological domain" description="Extracellular" evidence="2">
    <location>
        <begin position="109"/>
        <end position="213"/>
    </location>
</feature>
<feature type="transmembrane region" description="Helical; Name=3" evidence="2">
    <location>
        <begin position="214"/>
        <end position="234"/>
    </location>
</feature>
<feature type="topological domain" description="Cytoplasmic" evidence="2">
    <location>
        <begin position="235"/>
        <end position="239"/>
    </location>
</feature>
<feature type="transmembrane region" description="Helical; Name=4" evidence="2">
    <location>
        <begin position="240"/>
        <end position="260"/>
    </location>
</feature>
<feature type="topological domain" description="Extracellular" evidence="2">
    <location>
        <begin position="261"/>
        <end position="389"/>
    </location>
</feature>
<feature type="transmembrane region" description="Helical; Name=5" evidence="2">
    <location>
        <begin position="390"/>
        <end position="410"/>
    </location>
</feature>
<feature type="topological domain" description="Cytoplasmic" evidence="2">
    <location>
        <begin position="411"/>
        <end position="531"/>
    </location>
</feature>
<feature type="glycosylation site" description="N-linked (GlcNAc...) asparagine" evidence="2">
    <location>
        <position position="129"/>
    </location>
</feature>
<feature type="glycosylation site" description="N-linked (GlcNAc...) asparagine" evidence="2">
    <location>
        <position position="283"/>
    </location>
</feature>
<feature type="glycosylation site" description="N-linked (GlcNAc...) asparagine" evidence="2">
    <location>
        <position position="352"/>
    </location>
</feature>
<accession>Q6NUZ2</accession>
<gene>
    <name type="primary">ttyh2l</name>
    <name type="ORF">zgc:85736</name>
</gene>
<organism>
    <name type="scientific">Danio rerio</name>
    <name type="common">Zebrafish</name>
    <name type="synonym">Brachydanio rerio</name>
    <dbReference type="NCBI Taxonomy" id="7955"/>
    <lineage>
        <taxon>Eukaryota</taxon>
        <taxon>Metazoa</taxon>
        <taxon>Chordata</taxon>
        <taxon>Craniata</taxon>
        <taxon>Vertebrata</taxon>
        <taxon>Euteleostomi</taxon>
        <taxon>Actinopterygii</taxon>
        <taxon>Neopterygii</taxon>
        <taxon>Teleostei</taxon>
        <taxon>Ostariophysi</taxon>
        <taxon>Cypriniformes</taxon>
        <taxon>Danionidae</taxon>
        <taxon>Danioninae</taxon>
        <taxon>Danio</taxon>
    </lineage>
</organism>
<sequence>MASSRQDYIAPWWTYWLHNFPHLNFNFQTVDNTFKPEDASYQQSLVFLACVSAVALGLCLLLLSVYLTCLCCCRREEDEEVKRPDTCCVTWAAVITGLVICSAVGVGFYGNSETNDGVYQLTYSIYNANHTLGGIGSMVGNSLGSMQVGLKEHLERLDEIFSPRGDYTQTLRFMQQMADNIIQQLTAMPETRKVQVDLAAIADRTAFIEYYRWLTYLLLLILDLVICLLACLALAKQSRWLLTVIMVCGMLTLIMSWASLGAGTATAVGTSDFCVSPDKYIVNQTKGTLSSDIVHYYLYCSQSLPNPFQQSLTIFQRSLTTMQIQVQGLLQFAVVVFPTAEKDLLGIQRLLNSSEFNLHQLTALLDCRSLHKDYLEALLGVCYDGVEGLLYLCLFSLLAACAFCALLCAVPRAWMLIAIRDRDYDDIDEEDPFNPTRRFNAYNPSRAQVHSFCSYSSSMGSQTSLQPPLQATSSTPEYMNQSMLFERNPRYENVPLIGSGSPPPSYSPSMRTTYLSMTDAQIRHFGTDFQV</sequence>
<comment type="function">
    <text evidence="1">Probable large-conductance Ca(2+)-activated chloride channel.</text>
</comment>
<comment type="subcellular location">
    <subcellularLocation>
        <location evidence="1">Cell membrane</location>
        <topology evidence="2">Multi-pass membrane protein</topology>
    </subcellularLocation>
</comment>
<comment type="similarity">
    <text evidence="3">Belongs to the tweety family.</text>
</comment>
<dbReference type="EMBL" id="BC068374">
    <property type="protein sequence ID" value="AAH68374.1"/>
    <property type="molecule type" value="mRNA"/>
</dbReference>
<dbReference type="RefSeq" id="NP_998421.1">
    <property type="nucleotide sequence ID" value="NM_213256.1"/>
</dbReference>
<dbReference type="SMR" id="Q6NUZ2"/>
<dbReference type="FunCoup" id="Q6NUZ2">
    <property type="interactions" value="1191"/>
</dbReference>
<dbReference type="STRING" id="7955.ENSDARP00000018866"/>
<dbReference type="GlyCosmos" id="Q6NUZ2">
    <property type="glycosylation" value="3 sites, No reported glycans"/>
</dbReference>
<dbReference type="PaxDb" id="7955-ENSDARP00000018866"/>
<dbReference type="GeneID" id="406540"/>
<dbReference type="KEGG" id="dre:406540"/>
<dbReference type="AGR" id="ZFIN:ZDB-GENE-040426-2394"/>
<dbReference type="CTD" id="406540"/>
<dbReference type="ZFIN" id="ZDB-GENE-040426-2394">
    <property type="gene designation" value="ttyh2l"/>
</dbReference>
<dbReference type="eggNOG" id="KOG4433">
    <property type="taxonomic scope" value="Eukaryota"/>
</dbReference>
<dbReference type="InParanoid" id="Q6NUZ2"/>
<dbReference type="OrthoDB" id="187568at2759"/>
<dbReference type="PhylomeDB" id="Q6NUZ2"/>
<dbReference type="Reactome" id="R-DRE-2672351">
    <property type="pathway name" value="Stimuli-sensing channels"/>
</dbReference>
<dbReference type="PRO" id="PR:Q6NUZ2"/>
<dbReference type="Proteomes" id="UP000000437">
    <property type="component" value="Alternate scaffold 3"/>
</dbReference>
<dbReference type="Proteomes" id="UP000000437">
    <property type="component" value="Chromosome 3"/>
</dbReference>
<dbReference type="GO" id="GO:0034707">
    <property type="term" value="C:chloride channel complex"/>
    <property type="evidence" value="ECO:0007669"/>
    <property type="project" value="UniProtKB-KW"/>
</dbReference>
<dbReference type="GO" id="GO:0005886">
    <property type="term" value="C:plasma membrane"/>
    <property type="evidence" value="ECO:0000318"/>
    <property type="project" value="GO_Central"/>
</dbReference>
<dbReference type="GO" id="GO:0005229">
    <property type="term" value="F:intracellularly calcium-gated chloride channel activity"/>
    <property type="evidence" value="ECO:0000318"/>
    <property type="project" value="GO_Central"/>
</dbReference>
<dbReference type="GO" id="GO:0072320">
    <property type="term" value="F:volume-sensitive chloride channel activity"/>
    <property type="evidence" value="ECO:0000318"/>
    <property type="project" value="GO_Central"/>
</dbReference>
<dbReference type="CDD" id="cd07912">
    <property type="entry name" value="Tweety_N"/>
    <property type="match status" value="1"/>
</dbReference>
<dbReference type="InterPro" id="IPR006990">
    <property type="entry name" value="Tweety"/>
</dbReference>
<dbReference type="PANTHER" id="PTHR12424:SF17">
    <property type="entry name" value="PROTEIN TWEETY HOMOLOG 2-LIKE"/>
    <property type="match status" value="1"/>
</dbReference>
<dbReference type="PANTHER" id="PTHR12424">
    <property type="entry name" value="TWEETY-RELATED"/>
    <property type="match status" value="1"/>
</dbReference>
<dbReference type="Pfam" id="PF04906">
    <property type="entry name" value="Tweety"/>
    <property type="match status" value="1"/>
</dbReference>
<evidence type="ECO:0000250" key="1">
    <source>
        <dbReference type="UniProtKB" id="Q9BSA4"/>
    </source>
</evidence>
<evidence type="ECO:0000255" key="2"/>
<evidence type="ECO:0000305" key="3"/>
<protein>
    <recommendedName>
        <fullName>Protein tweety homolog 2-like</fullName>
    </recommendedName>
</protein>